<feature type="chain" id="PRO_0000241286" description="Aspartyl/glutamyl-tRNA(Asn/Gln) amidotransferase subunit B">
    <location>
        <begin position="1"/>
        <end position="494"/>
    </location>
</feature>
<accession>Q3AVV7</accession>
<keyword id="KW-0067">ATP-binding</keyword>
<keyword id="KW-0436">Ligase</keyword>
<keyword id="KW-0547">Nucleotide-binding</keyword>
<keyword id="KW-0648">Protein biosynthesis</keyword>
<keyword id="KW-1185">Reference proteome</keyword>
<sequence>MADAATQLPWEAVIGLETHVQLGTDSKIFTAASTTFGDEPNTHIDPVVCGLPGTLPVLNQKVLEYAVKAAMALNLNIAEHSKFDRKQYFYPDLPKNYQISQFDQPIAEEGWIEVEVAEKGKDTYLKTIGIERLHMEEDAGKLVHAGSDRLAGSTHSLVDYNRAGVALAEIVSKPDLRTGREAAEYASEIRRIMRYLGVSDGNMQEGSLRCDVNISVRRGPDAPFGTKVEIKNMNSFSAIQKAVDYEIKRQVKAYETGEPVVQETRLWDEGKQLTKSMRSKEGASDYRYFPDPDLGPIEVSPEQREGWRAELPELPAAKRHRYADDLGLSQYDARVLTDERQMADYFEAVVTAGADAKLSANWITGDLAAYVNSNRLSFAALPFRPEQLSEMVQLIDGGKISGKIAKEILPELLEKGGSPKAIVDERGLGMISDPAAIEAIVDELLGAHPEEVEAFRGGKTKLQGFFVGQLMKKTGGKADPKLANQILSQKLKGG</sequence>
<proteinExistence type="inferred from homology"/>
<name>GATB_SYNS9</name>
<reference key="1">
    <citation type="submission" date="2005-08" db="EMBL/GenBank/DDBJ databases">
        <title>Complete sequence of Synechococcus sp. CC9902.</title>
        <authorList>
            <person name="Copeland A."/>
            <person name="Lucas S."/>
            <person name="Lapidus A."/>
            <person name="Barry K."/>
            <person name="Detter J.C."/>
            <person name="Glavina T."/>
            <person name="Hammon N."/>
            <person name="Israni S."/>
            <person name="Pitluck S."/>
            <person name="Martinez M."/>
            <person name="Schmutz J."/>
            <person name="Larimer F."/>
            <person name="Land M."/>
            <person name="Kyrpides N."/>
            <person name="Ivanova N."/>
            <person name="Richardson P."/>
        </authorList>
    </citation>
    <scope>NUCLEOTIDE SEQUENCE [LARGE SCALE GENOMIC DNA]</scope>
    <source>
        <strain>CC9902</strain>
    </source>
</reference>
<evidence type="ECO:0000255" key="1">
    <source>
        <dbReference type="HAMAP-Rule" id="MF_00121"/>
    </source>
</evidence>
<gene>
    <name evidence="1" type="primary">gatB</name>
    <name type="ordered locus">Syncc9902_2169</name>
</gene>
<dbReference type="EC" id="6.3.5.-" evidence="1"/>
<dbReference type="EMBL" id="CP000097">
    <property type="protein sequence ID" value="ABB27127.1"/>
    <property type="molecule type" value="Genomic_DNA"/>
</dbReference>
<dbReference type="RefSeq" id="WP_011360908.1">
    <property type="nucleotide sequence ID" value="NC_007513.1"/>
</dbReference>
<dbReference type="SMR" id="Q3AVV7"/>
<dbReference type="STRING" id="316279.Syncc9902_2169"/>
<dbReference type="KEGG" id="sye:Syncc9902_2169"/>
<dbReference type="eggNOG" id="COG0064">
    <property type="taxonomic scope" value="Bacteria"/>
</dbReference>
<dbReference type="HOGENOM" id="CLU_019240_0_0_3"/>
<dbReference type="OrthoDB" id="9804078at2"/>
<dbReference type="Proteomes" id="UP000002712">
    <property type="component" value="Chromosome"/>
</dbReference>
<dbReference type="GO" id="GO:0050566">
    <property type="term" value="F:asparaginyl-tRNA synthase (glutamine-hydrolyzing) activity"/>
    <property type="evidence" value="ECO:0007669"/>
    <property type="project" value="RHEA"/>
</dbReference>
<dbReference type="GO" id="GO:0005524">
    <property type="term" value="F:ATP binding"/>
    <property type="evidence" value="ECO:0007669"/>
    <property type="project" value="UniProtKB-KW"/>
</dbReference>
<dbReference type="GO" id="GO:0050567">
    <property type="term" value="F:glutaminyl-tRNA synthase (glutamine-hydrolyzing) activity"/>
    <property type="evidence" value="ECO:0007669"/>
    <property type="project" value="UniProtKB-UniRule"/>
</dbReference>
<dbReference type="GO" id="GO:0070681">
    <property type="term" value="P:glutaminyl-tRNAGln biosynthesis via transamidation"/>
    <property type="evidence" value="ECO:0007669"/>
    <property type="project" value="TreeGrafter"/>
</dbReference>
<dbReference type="GO" id="GO:0006412">
    <property type="term" value="P:translation"/>
    <property type="evidence" value="ECO:0007669"/>
    <property type="project" value="UniProtKB-UniRule"/>
</dbReference>
<dbReference type="FunFam" id="1.10.10.410:FF:000001">
    <property type="entry name" value="Aspartyl/glutamyl-tRNA(Asn/Gln) amidotransferase subunit B"/>
    <property type="match status" value="1"/>
</dbReference>
<dbReference type="FunFam" id="1.10.150.380:FF:000001">
    <property type="entry name" value="Aspartyl/glutamyl-tRNA(Asn/Gln) amidotransferase subunit B"/>
    <property type="match status" value="1"/>
</dbReference>
<dbReference type="Gene3D" id="1.10.10.410">
    <property type="match status" value="1"/>
</dbReference>
<dbReference type="Gene3D" id="1.10.150.380">
    <property type="entry name" value="GatB domain, N-terminal subdomain"/>
    <property type="match status" value="1"/>
</dbReference>
<dbReference type="HAMAP" id="MF_00121">
    <property type="entry name" value="GatB"/>
    <property type="match status" value="1"/>
</dbReference>
<dbReference type="InterPro" id="IPR017959">
    <property type="entry name" value="Asn/Gln-tRNA_amidoTrfase_suB/E"/>
</dbReference>
<dbReference type="InterPro" id="IPR006075">
    <property type="entry name" value="Asn/Gln-tRNA_Trfase_suB/E_cat"/>
</dbReference>
<dbReference type="InterPro" id="IPR018027">
    <property type="entry name" value="Asn/Gln_amidotransferase"/>
</dbReference>
<dbReference type="InterPro" id="IPR003789">
    <property type="entry name" value="Asn/Gln_tRNA_amidoTrase-B-like"/>
</dbReference>
<dbReference type="InterPro" id="IPR004413">
    <property type="entry name" value="GatB"/>
</dbReference>
<dbReference type="InterPro" id="IPR042114">
    <property type="entry name" value="GatB_C_1"/>
</dbReference>
<dbReference type="InterPro" id="IPR023168">
    <property type="entry name" value="GatB_Yqey_C_2"/>
</dbReference>
<dbReference type="InterPro" id="IPR017958">
    <property type="entry name" value="Gln-tRNA_amidoTrfase_suB_CS"/>
</dbReference>
<dbReference type="InterPro" id="IPR014746">
    <property type="entry name" value="Gln_synth/guanido_kin_cat_dom"/>
</dbReference>
<dbReference type="NCBIfam" id="TIGR00133">
    <property type="entry name" value="gatB"/>
    <property type="match status" value="1"/>
</dbReference>
<dbReference type="NCBIfam" id="NF004012">
    <property type="entry name" value="PRK05477.1-2"/>
    <property type="match status" value="1"/>
</dbReference>
<dbReference type="NCBIfam" id="NF004014">
    <property type="entry name" value="PRK05477.1-4"/>
    <property type="match status" value="1"/>
</dbReference>
<dbReference type="PANTHER" id="PTHR11659">
    <property type="entry name" value="GLUTAMYL-TRNA GLN AMIDOTRANSFERASE SUBUNIT B MITOCHONDRIAL AND PROKARYOTIC PET112-RELATED"/>
    <property type="match status" value="1"/>
</dbReference>
<dbReference type="PANTHER" id="PTHR11659:SF0">
    <property type="entry name" value="GLUTAMYL-TRNA(GLN) AMIDOTRANSFERASE SUBUNIT B, MITOCHONDRIAL"/>
    <property type="match status" value="1"/>
</dbReference>
<dbReference type="Pfam" id="PF02934">
    <property type="entry name" value="GatB_N"/>
    <property type="match status" value="1"/>
</dbReference>
<dbReference type="Pfam" id="PF02637">
    <property type="entry name" value="GatB_Yqey"/>
    <property type="match status" value="1"/>
</dbReference>
<dbReference type="SMART" id="SM00845">
    <property type="entry name" value="GatB_Yqey"/>
    <property type="match status" value="1"/>
</dbReference>
<dbReference type="SUPFAM" id="SSF89095">
    <property type="entry name" value="GatB/YqeY motif"/>
    <property type="match status" value="1"/>
</dbReference>
<dbReference type="SUPFAM" id="SSF55931">
    <property type="entry name" value="Glutamine synthetase/guanido kinase"/>
    <property type="match status" value="1"/>
</dbReference>
<dbReference type="PROSITE" id="PS01234">
    <property type="entry name" value="GATB"/>
    <property type="match status" value="1"/>
</dbReference>
<comment type="function">
    <text evidence="1">Allows the formation of correctly charged Asn-tRNA(Asn) or Gln-tRNA(Gln) through the transamidation of misacylated Asp-tRNA(Asn) or Glu-tRNA(Gln) in organisms which lack either or both of asparaginyl-tRNA or glutaminyl-tRNA synthetases. The reaction takes place in the presence of glutamine and ATP through an activated phospho-Asp-tRNA(Asn) or phospho-Glu-tRNA(Gln).</text>
</comment>
<comment type="catalytic activity">
    <reaction evidence="1">
        <text>L-glutamyl-tRNA(Gln) + L-glutamine + ATP + H2O = L-glutaminyl-tRNA(Gln) + L-glutamate + ADP + phosphate + H(+)</text>
        <dbReference type="Rhea" id="RHEA:17521"/>
        <dbReference type="Rhea" id="RHEA-COMP:9681"/>
        <dbReference type="Rhea" id="RHEA-COMP:9684"/>
        <dbReference type="ChEBI" id="CHEBI:15377"/>
        <dbReference type="ChEBI" id="CHEBI:15378"/>
        <dbReference type="ChEBI" id="CHEBI:29985"/>
        <dbReference type="ChEBI" id="CHEBI:30616"/>
        <dbReference type="ChEBI" id="CHEBI:43474"/>
        <dbReference type="ChEBI" id="CHEBI:58359"/>
        <dbReference type="ChEBI" id="CHEBI:78520"/>
        <dbReference type="ChEBI" id="CHEBI:78521"/>
        <dbReference type="ChEBI" id="CHEBI:456216"/>
    </reaction>
</comment>
<comment type="catalytic activity">
    <reaction evidence="1">
        <text>L-aspartyl-tRNA(Asn) + L-glutamine + ATP + H2O = L-asparaginyl-tRNA(Asn) + L-glutamate + ADP + phosphate + 2 H(+)</text>
        <dbReference type="Rhea" id="RHEA:14513"/>
        <dbReference type="Rhea" id="RHEA-COMP:9674"/>
        <dbReference type="Rhea" id="RHEA-COMP:9677"/>
        <dbReference type="ChEBI" id="CHEBI:15377"/>
        <dbReference type="ChEBI" id="CHEBI:15378"/>
        <dbReference type="ChEBI" id="CHEBI:29985"/>
        <dbReference type="ChEBI" id="CHEBI:30616"/>
        <dbReference type="ChEBI" id="CHEBI:43474"/>
        <dbReference type="ChEBI" id="CHEBI:58359"/>
        <dbReference type="ChEBI" id="CHEBI:78515"/>
        <dbReference type="ChEBI" id="CHEBI:78516"/>
        <dbReference type="ChEBI" id="CHEBI:456216"/>
    </reaction>
</comment>
<comment type="subunit">
    <text evidence="1">Heterotrimer of A, B and C subunits.</text>
</comment>
<comment type="similarity">
    <text evidence="1">Belongs to the GatB/GatE family. GatB subfamily.</text>
</comment>
<protein>
    <recommendedName>
        <fullName evidence="1">Aspartyl/glutamyl-tRNA(Asn/Gln) amidotransferase subunit B</fullName>
        <shortName evidence="1">Asp/Glu-ADT subunit B</shortName>
        <ecNumber evidence="1">6.3.5.-</ecNumber>
    </recommendedName>
</protein>
<organism>
    <name type="scientific">Synechococcus sp. (strain CC9902)</name>
    <dbReference type="NCBI Taxonomy" id="316279"/>
    <lineage>
        <taxon>Bacteria</taxon>
        <taxon>Bacillati</taxon>
        <taxon>Cyanobacteriota</taxon>
        <taxon>Cyanophyceae</taxon>
        <taxon>Synechococcales</taxon>
        <taxon>Synechococcaceae</taxon>
        <taxon>Synechococcus</taxon>
    </lineage>
</organism>